<accession>A9MBP1</accession>
<evidence type="ECO:0000255" key="1">
    <source>
        <dbReference type="HAMAP-Rule" id="MF_01043"/>
    </source>
</evidence>
<comment type="function">
    <text evidence="1">Catalyzes the transfer of an acyl group from acyl-phosphate (acyl-PO(4)) to glycerol-3-phosphate (G3P) to form lysophosphatidic acid (LPA). This enzyme utilizes acyl-phosphate as fatty acyl donor, but not acyl-CoA or acyl-ACP.</text>
</comment>
<comment type="catalytic activity">
    <reaction evidence="1">
        <text>an acyl phosphate + sn-glycerol 3-phosphate = a 1-acyl-sn-glycero-3-phosphate + phosphate</text>
        <dbReference type="Rhea" id="RHEA:34075"/>
        <dbReference type="ChEBI" id="CHEBI:43474"/>
        <dbReference type="ChEBI" id="CHEBI:57597"/>
        <dbReference type="ChEBI" id="CHEBI:57970"/>
        <dbReference type="ChEBI" id="CHEBI:59918"/>
        <dbReference type="EC" id="2.3.1.275"/>
    </reaction>
</comment>
<comment type="pathway">
    <text evidence="1">Lipid metabolism; phospholipid metabolism.</text>
</comment>
<comment type="subunit">
    <text evidence="1">Probably interacts with PlsX.</text>
</comment>
<comment type="subcellular location">
    <subcellularLocation>
        <location evidence="1">Cell inner membrane</location>
        <topology evidence="1">Multi-pass membrane protein</topology>
    </subcellularLocation>
</comment>
<comment type="similarity">
    <text evidence="1">Belongs to the PlsY family.</text>
</comment>
<feature type="chain" id="PRO_1000084379" description="Glycerol-3-phosphate acyltransferase">
    <location>
        <begin position="1"/>
        <end position="201"/>
    </location>
</feature>
<feature type="transmembrane region" description="Helical" evidence="1">
    <location>
        <begin position="10"/>
        <end position="30"/>
    </location>
</feature>
<feature type="transmembrane region" description="Helical" evidence="1">
    <location>
        <begin position="60"/>
        <end position="80"/>
    </location>
</feature>
<feature type="transmembrane region" description="Helical" evidence="1">
    <location>
        <begin position="86"/>
        <end position="106"/>
    </location>
</feature>
<feature type="transmembrane region" description="Helical" evidence="1">
    <location>
        <begin position="116"/>
        <end position="136"/>
    </location>
</feature>
<feature type="transmembrane region" description="Helical" evidence="1">
    <location>
        <begin position="166"/>
        <end position="186"/>
    </location>
</feature>
<gene>
    <name evidence="1" type="primary">plsY</name>
    <name type="ordered locus">BCAN_B0602</name>
</gene>
<organism>
    <name type="scientific">Brucella canis (strain ATCC 23365 / NCTC 10854 / RM-666)</name>
    <dbReference type="NCBI Taxonomy" id="483179"/>
    <lineage>
        <taxon>Bacteria</taxon>
        <taxon>Pseudomonadati</taxon>
        <taxon>Pseudomonadota</taxon>
        <taxon>Alphaproteobacteria</taxon>
        <taxon>Hyphomicrobiales</taxon>
        <taxon>Brucellaceae</taxon>
        <taxon>Brucella/Ochrobactrum group</taxon>
        <taxon>Brucella</taxon>
    </lineage>
</organism>
<keyword id="KW-0997">Cell inner membrane</keyword>
<keyword id="KW-1003">Cell membrane</keyword>
<keyword id="KW-0444">Lipid biosynthesis</keyword>
<keyword id="KW-0443">Lipid metabolism</keyword>
<keyword id="KW-0472">Membrane</keyword>
<keyword id="KW-0594">Phospholipid biosynthesis</keyword>
<keyword id="KW-1208">Phospholipid metabolism</keyword>
<keyword id="KW-1185">Reference proteome</keyword>
<keyword id="KW-0808">Transferase</keyword>
<keyword id="KW-0812">Transmembrane</keyword>
<keyword id="KW-1133">Transmembrane helix</keyword>
<proteinExistence type="inferred from homology"/>
<protein>
    <recommendedName>
        <fullName evidence="1">Glycerol-3-phosphate acyltransferase</fullName>
    </recommendedName>
    <alternativeName>
        <fullName evidence="1">Acyl-PO4 G3P acyltransferase</fullName>
    </alternativeName>
    <alternativeName>
        <fullName evidence="1">Acyl-phosphate--glycerol-3-phosphate acyltransferase</fullName>
    </alternativeName>
    <alternativeName>
        <fullName evidence="1">G3P acyltransferase</fullName>
        <shortName evidence="1">GPAT</shortName>
        <ecNumber evidence="1">2.3.1.275</ecNumber>
    </alternativeName>
    <alternativeName>
        <fullName evidence="1">Lysophosphatidic acid synthase</fullName>
        <shortName evidence="1">LPA synthase</shortName>
    </alternativeName>
</protein>
<sequence length="201" mass="20607">MAEPGFFNAMLIGALIFGYVLGSIPFGLILTRLAGLGDVRAIGSGNIGATNVLRTGNKKLAAATLILDALKGTAAALIAAHFGQNAAIAAGFGAFIGHLFPVWIGFKGGKGVATYLGVLIGLAWAGALVFAAAWIVTALLTRYSSLSALVASLVVPIALYSRGNQALAALFAIMTVIVFIKHRANIRRLLNGTESKIGAKG</sequence>
<name>PLSY_BRUC2</name>
<dbReference type="EC" id="2.3.1.275" evidence="1"/>
<dbReference type="EMBL" id="CP000873">
    <property type="protein sequence ID" value="ABX63778.1"/>
    <property type="molecule type" value="Genomic_DNA"/>
</dbReference>
<dbReference type="RefSeq" id="WP_004690218.1">
    <property type="nucleotide sequence ID" value="NC_010104.1"/>
</dbReference>
<dbReference type="SMR" id="A9MBP1"/>
<dbReference type="GeneID" id="55592272"/>
<dbReference type="KEGG" id="bcs:BCAN_B0602"/>
<dbReference type="HOGENOM" id="CLU_081254_1_0_5"/>
<dbReference type="PhylomeDB" id="A9MBP1"/>
<dbReference type="UniPathway" id="UPA00085"/>
<dbReference type="Proteomes" id="UP000001385">
    <property type="component" value="Chromosome II"/>
</dbReference>
<dbReference type="GO" id="GO:0005886">
    <property type="term" value="C:plasma membrane"/>
    <property type="evidence" value="ECO:0007669"/>
    <property type="project" value="UniProtKB-SubCell"/>
</dbReference>
<dbReference type="GO" id="GO:0043772">
    <property type="term" value="F:acyl-phosphate glycerol-3-phosphate acyltransferase activity"/>
    <property type="evidence" value="ECO:0007669"/>
    <property type="project" value="UniProtKB-UniRule"/>
</dbReference>
<dbReference type="GO" id="GO:0008654">
    <property type="term" value="P:phospholipid biosynthetic process"/>
    <property type="evidence" value="ECO:0007669"/>
    <property type="project" value="UniProtKB-UniRule"/>
</dbReference>
<dbReference type="HAMAP" id="MF_01043">
    <property type="entry name" value="PlsY"/>
    <property type="match status" value="1"/>
</dbReference>
<dbReference type="InterPro" id="IPR003811">
    <property type="entry name" value="G3P_acylTferase_PlsY"/>
</dbReference>
<dbReference type="NCBIfam" id="TIGR00023">
    <property type="entry name" value="glycerol-3-phosphate 1-O-acyltransferase PlsY"/>
    <property type="match status" value="1"/>
</dbReference>
<dbReference type="PANTHER" id="PTHR30309:SF0">
    <property type="entry name" value="GLYCEROL-3-PHOSPHATE ACYLTRANSFERASE-RELATED"/>
    <property type="match status" value="1"/>
</dbReference>
<dbReference type="PANTHER" id="PTHR30309">
    <property type="entry name" value="INNER MEMBRANE PROTEIN YGIH"/>
    <property type="match status" value="1"/>
</dbReference>
<dbReference type="Pfam" id="PF02660">
    <property type="entry name" value="G3P_acyltransf"/>
    <property type="match status" value="1"/>
</dbReference>
<dbReference type="SMART" id="SM01207">
    <property type="entry name" value="G3P_acyltransf"/>
    <property type="match status" value="1"/>
</dbReference>
<reference key="1">
    <citation type="submission" date="2007-10" db="EMBL/GenBank/DDBJ databases">
        <title>Brucella canis ATCC 23365 whole genome shotgun sequencing project.</title>
        <authorList>
            <person name="Setubal J.C."/>
            <person name="Bowns C."/>
            <person name="Boyle S."/>
            <person name="Crasta O.R."/>
            <person name="Czar M.J."/>
            <person name="Dharmanolla C."/>
            <person name="Gillespie J.J."/>
            <person name="Kenyon R.W."/>
            <person name="Lu J."/>
            <person name="Mane S."/>
            <person name="Mohapatra S."/>
            <person name="Nagrani S."/>
            <person name="Purkayastha A."/>
            <person name="Rajasimha H.K."/>
            <person name="Shallom J.M."/>
            <person name="Shallom S."/>
            <person name="Shukla M."/>
            <person name="Snyder E.E."/>
            <person name="Sobral B.W."/>
            <person name="Wattam A.R."/>
            <person name="Will R."/>
            <person name="Williams K."/>
            <person name="Yoo H."/>
            <person name="Bruce D."/>
            <person name="Detter C."/>
            <person name="Munk C."/>
            <person name="Brettin T.S."/>
        </authorList>
    </citation>
    <scope>NUCLEOTIDE SEQUENCE [LARGE SCALE GENOMIC DNA]</scope>
    <source>
        <strain>ATCC 23365 / NCTC 10854 / RM-666</strain>
    </source>
</reference>